<keyword id="KW-0227">DNA damage</keyword>
<keyword id="KW-0234">DNA repair</keyword>
<keyword id="KW-0238">DNA-binding</keyword>
<keyword id="KW-0326">Glycosidase</keyword>
<keyword id="KW-0378">Hydrolase</keyword>
<keyword id="KW-0456">Lyase</keyword>
<keyword id="KW-0479">Metal-binding</keyword>
<keyword id="KW-0511">Multifunctional enzyme</keyword>
<keyword id="KW-1185">Reference proteome</keyword>
<keyword id="KW-0862">Zinc</keyword>
<keyword id="KW-0863">Zinc-finger</keyword>
<proteinExistence type="inferred from homology"/>
<protein>
    <recommendedName>
        <fullName evidence="2">Formamidopyrimidine-DNA glycosylase</fullName>
        <shortName evidence="2">Fapy-DNA glycosylase</shortName>
        <ecNumber evidence="2">3.2.2.23</ecNumber>
    </recommendedName>
    <alternativeName>
        <fullName evidence="2">DNA-(apurinic or apyrimidinic site) lyase MutM</fullName>
        <shortName evidence="2">AP lyase MutM</shortName>
        <ecNumber evidence="2">4.2.99.18</ecNumber>
    </alternativeName>
</protein>
<name>FPG_IDILO</name>
<reference key="1">
    <citation type="journal article" date="2004" name="Proc. Natl. Acad. Sci. U.S.A.">
        <title>Genome sequence of the deep-sea gamma-proteobacterium Idiomarina loihiensis reveals amino acid fermentation as a source of carbon and energy.</title>
        <authorList>
            <person name="Hou S."/>
            <person name="Saw J.H."/>
            <person name="Lee K.S."/>
            <person name="Freitas T.A."/>
            <person name="Belisle C."/>
            <person name="Kawarabayasi Y."/>
            <person name="Donachie S.P."/>
            <person name="Pikina A."/>
            <person name="Galperin M.Y."/>
            <person name="Koonin E.V."/>
            <person name="Makarova K.S."/>
            <person name="Omelchenko M.V."/>
            <person name="Sorokin A."/>
            <person name="Wolf Y.I."/>
            <person name="Li Q.X."/>
            <person name="Keum Y.S."/>
            <person name="Campbell S."/>
            <person name="Denery J."/>
            <person name="Aizawa S."/>
            <person name="Shibata S."/>
            <person name="Malahoff A."/>
            <person name="Alam M."/>
        </authorList>
    </citation>
    <scope>NUCLEOTIDE SEQUENCE [LARGE SCALE GENOMIC DNA]</scope>
    <source>
        <strain>ATCC BAA-735 / DSM 15497 / L2-TR</strain>
    </source>
</reference>
<feature type="initiator methionine" description="Removed" evidence="1">
    <location>
        <position position="1"/>
    </location>
</feature>
<feature type="chain" id="PRO_0000228439" description="Formamidopyrimidine-DNA glycosylase">
    <location>
        <begin position="2"/>
        <end position="270"/>
    </location>
</feature>
<feature type="zinc finger region" description="FPG-type" evidence="2">
    <location>
        <begin position="236"/>
        <end position="270"/>
    </location>
</feature>
<feature type="active site" description="Schiff-base intermediate with DNA" evidence="2">
    <location>
        <position position="2"/>
    </location>
</feature>
<feature type="active site" description="Proton donor" evidence="2">
    <location>
        <position position="3"/>
    </location>
</feature>
<feature type="active site" description="Proton donor; for beta-elimination activity" evidence="2">
    <location>
        <position position="57"/>
    </location>
</feature>
<feature type="active site" description="Proton donor; for delta-elimination activity" evidence="2">
    <location>
        <position position="260"/>
    </location>
</feature>
<feature type="binding site" evidence="2">
    <location>
        <position position="90"/>
    </location>
    <ligand>
        <name>DNA</name>
        <dbReference type="ChEBI" id="CHEBI:16991"/>
    </ligand>
</feature>
<feature type="binding site" evidence="2">
    <location>
        <position position="109"/>
    </location>
    <ligand>
        <name>DNA</name>
        <dbReference type="ChEBI" id="CHEBI:16991"/>
    </ligand>
</feature>
<feature type="binding site" evidence="2">
    <location>
        <position position="151"/>
    </location>
    <ligand>
        <name>DNA</name>
        <dbReference type="ChEBI" id="CHEBI:16991"/>
    </ligand>
</feature>
<gene>
    <name evidence="2" type="primary">mutM</name>
    <name evidence="2" type="synonym">fpg</name>
    <name type="ordered locus">IL0245</name>
</gene>
<dbReference type="EC" id="3.2.2.23" evidence="2"/>
<dbReference type="EC" id="4.2.99.18" evidence="2"/>
<dbReference type="EMBL" id="AE017340">
    <property type="protein sequence ID" value="AAV81088.1"/>
    <property type="molecule type" value="Genomic_DNA"/>
</dbReference>
<dbReference type="RefSeq" id="WP_011233507.1">
    <property type="nucleotide sequence ID" value="NC_006512.1"/>
</dbReference>
<dbReference type="SMR" id="Q5QZC1"/>
<dbReference type="STRING" id="283942.IL0245"/>
<dbReference type="GeneID" id="41335391"/>
<dbReference type="KEGG" id="ilo:IL0245"/>
<dbReference type="eggNOG" id="COG0266">
    <property type="taxonomic scope" value="Bacteria"/>
</dbReference>
<dbReference type="HOGENOM" id="CLU_038423_1_1_6"/>
<dbReference type="OrthoDB" id="9800855at2"/>
<dbReference type="Proteomes" id="UP000001171">
    <property type="component" value="Chromosome"/>
</dbReference>
<dbReference type="GO" id="GO:0034039">
    <property type="term" value="F:8-oxo-7,8-dihydroguanine DNA N-glycosylase activity"/>
    <property type="evidence" value="ECO:0007669"/>
    <property type="project" value="TreeGrafter"/>
</dbReference>
<dbReference type="GO" id="GO:0140078">
    <property type="term" value="F:class I DNA-(apurinic or apyrimidinic site) endonuclease activity"/>
    <property type="evidence" value="ECO:0007669"/>
    <property type="project" value="UniProtKB-EC"/>
</dbReference>
<dbReference type="GO" id="GO:0003684">
    <property type="term" value="F:damaged DNA binding"/>
    <property type="evidence" value="ECO:0007669"/>
    <property type="project" value="InterPro"/>
</dbReference>
<dbReference type="GO" id="GO:0008270">
    <property type="term" value="F:zinc ion binding"/>
    <property type="evidence" value="ECO:0007669"/>
    <property type="project" value="UniProtKB-UniRule"/>
</dbReference>
<dbReference type="GO" id="GO:0006284">
    <property type="term" value="P:base-excision repair"/>
    <property type="evidence" value="ECO:0007669"/>
    <property type="project" value="InterPro"/>
</dbReference>
<dbReference type="CDD" id="cd08966">
    <property type="entry name" value="EcFpg-like_N"/>
    <property type="match status" value="1"/>
</dbReference>
<dbReference type="FunFam" id="1.10.8.50:FF:000003">
    <property type="entry name" value="Formamidopyrimidine-DNA glycosylase"/>
    <property type="match status" value="1"/>
</dbReference>
<dbReference type="FunFam" id="3.20.190.10:FF:000001">
    <property type="entry name" value="Formamidopyrimidine-DNA glycosylase"/>
    <property type="match status" value="1"/>
</dbReference>
<dbReference type="Gene3D" id="1.10.8.50">
    <property type="match status" value="1"/>
</dbReference>
<dbReference type="Gene3D" id="3.20.190.10">
    <property type="entry name" value="MutM-like, N-terminal"/>
    <property type="match status" value="1"/>
</dbReference>
<dbReference type="HAMAP" id="MF_00103">
    <property type="entry name" value="Fapy_DNA_glycosyl"/>
    <property type="match status" value="1"/>
</dbReference>
<dbReference type="InterPro" id="IPR015886">
    <property type="entry name" value="DNA_glyclase/AP_lyase_DNA-bd"/>
</dbReference>
<dbReference type="InterPro" id="IPR015887">
    <property type="entry name" value="DNA_glyclase_Znf_dom_DNA_BS"/>
</dbReference>
<dbReference type="InterPro" id="IPR020629">
    <property type="entry name" value="Formamido-pyr_DNA_Glyclase"/>
</dbReference>
<dbReference type="InterPro" id="IPR012319">
    <property type="entry name" value="FPG_cat"/>
</dbReference>
<dbReference type="InterPro" id="IPR035937">
    <property type="entry name" value="MutM-like_N-ter"/>
</dbReference>
<dbReference type="InterPro" id="IPR010979">
    <property type="entry name" value="Ribosomal_uS13-like_H2TH"/>
</dbReference>
<dbReference type="InterPro" id="IPR000214">
    <property type="entry name" value="Znf_DNA_glyclase/AP_lyase"/>
</dbReference>
<dbReference type="InterPro" id="IPR010663">
    <property type="entry name" value="Znf_FPG/IleRS"/>
</dbReference>
<dbReference type="NCBIfam" id="TIGR00577">
    <property type="entry name" value="fpg"/>
    <property type="match status" value="1"/>
</dbReference>
<dbReference type="NCBIfam" id="NF002211">
    <property type="entry name" value="PRK01103.1"/>
    <property type="match status" value="1"/>
</dbReference>
<dbReference type="PANTHER" id="PTHR22993">
    <property type="entry name" value="FORMAMIDOPYRIMIDINE-DNA GLYCOSYLASE"/>
    <property type="match status" value="1"/>
</dbReference>
<dbReference type="PANTHER" id="PTHR22993:SF9">
    <property type="entry name" value="FORMAMIDOPYRIMIDINE-DNA GLYCOSYLASE"/>
    <property type="match status" value="1"/>
</dbReference>
<dbReference type="Pfam" id="PF01149">
    <property type="entry name" value="Fapy_DNA_glyco"/>
    <property type="match status" value="1"/>
</dbReference>
<dbReference type="Pfam" id="PF06831">
    <property type="entry name" value="H2TH"/>
    <property type="match status" value="1"/>
</dbReference>
<dbReference type="Pfam" id="PF06827">
    <property type="entry name" value="zf-FPG_IleRS"/>
    <property type="match status" value="1"/>
</dbReference>
<dbReference type="SMART" id="SM00898">
    <property type="entry name" value="Fapy_DNA_glyco"/>
    <property type="match status" value="1"/>
</dbReference>
<dbReference type="SMART" id="SM01232">
    <property type="entry name" value="H2TH"/>
    <property type="match status" value="1"/>
</dbReference>
<dbReference type="SUPFAM" id="SSF57716">
    <property type="entry name" value="Glucocorticoid receptor-like (DNA-binding domain)"/>
    <property type="match status" value="1"/>
</dbReference>
<dbReference type="SUPFAM" id="SSF81624">
    <property type="entry name" value="N-terminal domain of MutM-like DNA repair proteins"/>
    <property type="match status" value="1"/>
</dbReference>
<dbReference type="SUPFAM" id="SSF46946">
    <property type="entry name" value="S13-like H2TH domain"/>
    <property type="match status" value="1"/>
</dbReference>
<dbReference type="PROSITE" id="PS51068">
    <property type="entry name" value="FPG_CAT"/>
    <property type="match status" value="1"/>
</dbReference>
<dbReference type="PROSITE" id="PS01242">
    <property type="entry name" value="ZF_FPG_1"/>
    <property type="match status" value="1"/>
</dbReference>
<dbReference type="PROSITE" id="PS51066">
    <property type="entry name" value="ZF_FPG_2"/>
    <property type="match status" value="1"/>
</dbReference>
<sequence>MPELPEVEVSRLGISPHIEGRTIKSVKVHDKRLRWPVPETVHKVEGHVLRSVSRRSKYLLLQTDNGCLILHLGMSGKLRVVPAETTHYKHDHIDIEFDNGQTLRLNDPRRFGALLYSESDVSGHELLSQLGPEPLTDAFNIDYLFERSRGRSQSVKTFLMDNKVVVGVGNIYANEALFKAGINPKRAAGKISKVRYQKLVPIIKETLASAIELGGTTLKDFTQVDGNPGYFAQKLQVYGRGGKLCMVCSNRLKEVRLGQRSTVYCTQCQR</sequence>
<evidence type="ECO:0000250" key="1"/>
<evidence type="ECO:0000255" key="2">
    <source>
        <dbReference type="HAMAP-Rule" id="MF_00103"/>
    </source>
</evidence>
<organism>
    <name type="scientific">Idiomarina loihiensis (strain ATCC BAA-735 / DSM 15497 / L2-TR)</name>
    <dbReference type="NCBI Taxonomy" id="283942"/>
    <lineage>
        <taxon>Bacteria</taxon>
        <taxon>Pseudomonadati</taxon>
        <taxon>Pseudomonadota</taxon>
        <taxon>Gammaproteobacteria</taxon>
        <taxon>Alteromonadales</taxon>
        <taxon>Idiomarinaceae</taxon>
        <taxon>Idiomarina</taxon>
    </lineage>
</organism>
<accession>Q5QZC1</accession>
<comment type="function">
    <text evidence="2">Involved in base excision repair of DNA damaged by oxidation or by mutagenic agents. Acts as a DNA glycosylase that recognizes and removes damaged bases. Has a preference for oxidized purines, such as 7,8-dihydro-8-oxoguanine (8-oxoG). Has AP (apurinic/apyrimidinic) lyase activity and introduces nicks in the DNA strand. Cleaves the DNA backbone by beta-delta elimination to generate a single-strand break at the site of the removed base with both 3'- and 5'-phosphates.</text>
</comment>
<comment type="catalytic activity">
    <reaction evidence="2">
        <text>Hydrolysis of DNA containing ring-opened 7-methylguanine residues, releasing 2,6-diamino-4-hydroxy-5-(N-methyl)formamidopyrimidine.</text>
        <dbReference type="EC" id="3.2.2.23"/>
    </reaction>
</comment>
<comment type="catalytic activity">
    <reaction evidence="2">
        <text>2'-deoxyribonucleotide-(2'-deoxyribose 5'-phosphate)-2'-deoxyribonucleotide-DNA = a 3'-end 2'-deoxyribonucleotide-(2,3-dehydro-2,3-deoxyribose 5'-phosphate)-DNA + a 5'-end 5'-phospho-2'-deoxyribonucleoside-DNA + H(+)</text>
        <dbReference type="Rhea" id="RHEA:66592"/>
        <dbReference type="Rhea" id="RHEA-COMP:13180"/>
        <dbReference type="Rhea" id="RHEA-COMP:16897"/>
        <dbReference type="Rhea" id="RHEA-COMP:17067"/>
        <dbReference type="ChEBI" id="CHEBI:15378"/>
        <dbReference type="ChEBI" id="CHEBI:136412"/>
        <dbReference type="ChEBI" id="CHEBI:157695"/>
        <dbReference type="ChEBI" id="CHEBI:167181"/>
        <dbReference type="EC" id="4.2.99.18"/>
    </reaction>
</comment>
<comment type="cofactor">
    <cofactor evidence="2">
        <name>Zn(2+)</name>
        <dbReference type="ChEBI" id="CHEBI:29105"/>
    </cofactor>
    <text evidence="2">Binds 1 zinc ion per subunit.</text>
</comment>
<comment type="subunit">
    <text evidence="2">Monomer.</text>
</comment>
<comment type="similarity">
    <text evidence="2">Belongs to the FPG family.</text>
</comment>